<comment type="function">
    <text evidence="6 7">May bind integrin alpha-8/beta-1 and play a role in hair follicle morphogenesis. Promotes matrix assembly.</text>
</comment>
<comment type="subcellular location">
    <subcellularLocation>
        <location evidence="7">Secreted</location>
        <location evidence="7">Extracellular space</location>
        <location evidence="7">Extracellular matrix</location>
        <location evidence="7">Basement membrane</location>
    </subcellularLocation>
</comment>
<comment type="tissue specificity">
    <text evidence="6">Expressed at basement membrane of pelage follicles (at protein level).</text>
</comment>
<comment type="developmental stage">
    <text evidence="5 6 7">Detected in early lateral dermatome and in all dermatome derivatives. Expressed at the basement membrane of embryonic skin and developing hair follicles. At 16.5 dpc, present in lung epithelium, and developing oral and tooth germ epithelia (at protein level).</text>
</comment>
<comment type="similarity">
    <text evidence="8">Belongs to the nephronectin family.</text>
</comment>
<keyword id="KW-0084">Basement membrane</keyword>
<keyword id="KW-0106">Calcium</keyword>
<keyword id="KW-0130">Cell adhesion</keyword>
<keyword id="KW-0175">Coiled coil</keyword>
<keyword id="KW-0217">Developmental protein</keyword>
<keyword id="KW-0221">Differentiation</keyword>
<keyword id="KW-1015">Disulfide bond</keyword>
<keyword id="KW-0245">EGF-like domain</keyword>
<keyword id="KW-0272">Extracellular matrix</keyword>
<keyword id="KW-0325">Glycoprotein</keyword>
<keyword id="KW-1185">Reference proteome</keyword>
<keyword id="KW-0677">Repeat</keyword>
<keyword id="KW-0964">Secreted</keyword>
<keyword id="KW-0732">Signal</keyword>
<gene>
    <name type="primary">Egfl6</name>
    <name type="synonym">Maeg</name>
</gene>
<sequence>MQPPWGLALPLLLPWVTGGVGTSPWDYGLSALAHQPGVCQYGTKMACCYGWKRNNKGVCEAMCEPRCKFGECVGPNKCRCFPGYTGKTCTQDVNECGVKPRPCQHRCVNTHGSYKCFCLSGHMLLPDATCSNSRTCARLNCQYGCEDTEEGPRCVCPSSGLRLGPNGRVCLDIDECASSKAVCPSNRRCVNTFGSYYCKCHIGFELKYIGRRYDCVDINECALNTHPCSPHANCLNTRGSFKCKCKQGYRGNGLQCSVIPEHSVKEILTAPGTIKDRIKKLLAHKRTMKKKVKLKMVTPRPASTRVPKVNLPYSSEEGVSRGRNYDGEQKKKEEGKRERLEEEKGEKTLRNEVEQERTLRGDVFSPKVNEAEDLDLVYVQRKELNSKLKHKDLNISVDCSFDLGVCDWKQDREDDFDWHPADRDNDVGYYMAVPALAGHKKNIGRLKLLLPNLTPQSNFCLLFDYRLAGDKVGKLRVFVKNSNNALAWEETKNEDGRWRTGKIQLYQGIDTTKSVIFEAERGKGKTGEIAVDGVLLVSGLCPDDFLSVEG</sequence>
<reference key="1">
    <citation type="journal article" date="2000" name="Genomics">
        <title>Identification of a new EGF-repeat-containing gene from human Xp22: a candidate for developmental disorders.</title>
        <authorList>
            <person name="Buchner G."/>
            <person name="Orfanelli U."/>
            <person name="Quaderi N."/>
            <person name="Bassi M.T."/>
            <person name="Andolfi G."/>
        </authorList>
    </citation>
    <scope>NUCLEOTIDE SEQUENCE [MRNA]</scope>
    <source>
        <tissue>Embryo</tissue>
    </source>
</reference>
<reference key="2">
    <citation type="journal article" date="2009" name="PLoS Biol.">
        <title>Lineage-specific biology revealed by a finished genome assembly of the mouse.</title>
        <authorList>
            <person name="Church D.M."/>
            <person name="Goodstadt L."/>
            <person name="Hillier L.W."/>
            <person name="Zody M.C."/>
            <person name="Goldstein S."/>
            <person name="She X."/>
            <person name="Bult C.J."/>
            <person name="Agarwala R."/>
            <person name="Cherry J.L."/>
            <person name="DiCuccio M."/>
            <person name="Hlavina W."/>
            <person name="Kapustin Y."/>
            <person name="Meric P."/>
            <person name="Maglott D."/>
            <person name="Birtle Z."/>
            <person name="Marques A.C."/>
            <person name="Graves T."/>
            <person name="Zhou S."/>
            <person name="Teague B."/>
            <person name="Potamousis K."/>
            <person name="Churas C."/>
            <person name="Place M."/>
            <person name="Herschleb J."/>
            <person name="Runnheim R."/>
            <person name="Forrest D."/>
            <person name="Amos-Landgraf J."/>
            <person name="Schwartz D.C."/>
            <person name="Cheng Z."/>
            <person name="Lindblad-Toh K."/>
            <person name="Eichler E.E."/>
            <person name="Ponting C.P."/>
        </authorList>
    </citation>
    <scope>NUCLEOTIDE SEQUENCE [LARGE SCALE GENOMIC DNA]</scope>
    <source>
        <strain>C57BL/6J</strain>
    </source>
</reference>
<reference key="3">
    <citation type="journal article" date="2004" name="Genome Res.">
        <title>The status, quality, and expansion of the NIH full-length cDNA project: the Mammalian Gene Collection (MGC).</title>
        <authorList>
            <consortium name="The MGC Project Team"/>
        </authorList>
    </citation>
    <scope>NUCLEOTIDE SEQUENCE [LARGE SCALE MRNA]</scope>
</reference>
<reference key="4">
    <citation type="journal article" date="2005" name="Science">
        <title>The transcriptional landscape of the mammalian genome.</title>
        <authorList>
            <person name="Carninci P."/>
            <person name="Kasukawa T."/>
            <person name="Katayama S."/>
            <person name="Gough J."/>
            <person name="Frith M.C."/>
            <person name="Maeda N."/>
            <person name="Oyama R."/>
            <person name="Ravasi T."/>
            <person name="Lenhard B."/>
            <person name="Wells C."/>
            <person name="Kodzius R."/>
            <person name="Shimokawa K."/>
            <person name="Bajic V.B."/>
            <person name="Brenner S.E."/>
            <person name="Batalov S."/>
            <person name="Forrest A.R."/>
            <person name="Zavolan M."/>
            <person name="Davis M.J."/>
            <person name="Wilming L.G."/>
            <person name="Aidinis V."/>
            <person name="Allen J.E."/>
            <person name="Ambesi-Impiombato A."/>
            <person name="Apweiler R."/>
            <person name="Aturaliya R.N."/>
            <person name="Bailey T.L."/>
            <person name="Bansal M."/>
            <person name="Baxter L."/>
            <person name="Beisel K.W."/>
            <person name="Bersano T."/>
            <person name="Bono H."/>
            <person name="Chalk A.M."/>
            <person name="Chiu K.P."/>
            <person name="Choudhary V."/>
            <person name="Christoffels A."/>
            <person name="Clutterbuck D.R."/>
            <person name="Crowe M.L."/>
            <person name="Dalla E."/>
            <person name="Dalrymple B.P."/>
            <person name="de Bono B."/>
            <person name="Della Gatta G."/>
            <person name="di Bernardo D."/>
            <person name="Down T."/>
            <person name="Engstrom P."/>
            <person name="Fagiolini M."/>
            <person name="Faulkner G."/>
            <person name="Fletcher C.F."/>
            <person name="Fukushima T."/>
            <person name="Furuno M."/>
            <person name="Futaki S."/>
            <person name="Gariboldi M."/>
            <person name="Georgii-Hemming P."/>
            <person name="Gingeras T.R."/>
            <person name="Gojobori T."/>
            <person name="Green R.E."/>
            <person name="Gustincich S."/>
            <person name="Harbers M."/>
            <person name="Hayashi Y."/>
            <person name="Hensch T.K."/>
            <person name="Hirokawa N."/>
            <person name="Hill D."/>
            <person name="Huminiecki L."/>
            <person name="Iacono M."/>
            <person name="Ikeo K."/>
            <person name="Iwama A."/>
            <person name="Ishikawa T."/>
            <person name="Jakt M."/>
            <person name="Kanapin A."/>
            <person name="Katoh M."/>
            <person name="Kawasawa Y."/>
            <person name="Kelso J."/>
            <person name="Kitamura H."/>
            <person name="Kitano H."/>
            <person name="Kollias G."/>
            <person name="Krishnan S.P."/>
            <person name="Kruger A."/>
            <person name="Kummerfeld S.K."/>
            <person name="Kurochkin I.V."/>
            <person name="Lareau L.F."/>
            <person name="Lazarevic D."/>
            <person name="Lipovich L."/>
            <person name="Liu J."/>
            <person name="Liuni S."/>
            <person name="McWilliam S."/>
            <person name="Madan Babu M."/>
            <person name="Madera M."/>
            <person name="Marchionni L."/>
            <person name="Matsuda H."/>
            <person name="Matsuzawa S."/>
            <person name="Miki H."/>
            <person name="Mignone F."/>
            <person name="Miyake S."/>
            <person name="Morris K."/>
            <person name="Mottagui-Tabar S."/>
            <person name="Mulder N."/>
            <person name="Nakano N."/>
            <person name="Nakauchi H."/>
            <person name="Ng P."/>
            <person name="Nilsson R."/>
            <person name="Nishiguchi S."/>
            <person name="Nishikawa S."/>
            <person name="Nori F."/>
            <person name="Ohara O."/>
            <person name="Okazaki Y."/>
            <person name="Orlando V."/>
            <person name="Pang K.C."/>
            <person name="Pavan W.J."/>
            <person name="Pavesi G."/>
            <person name="Pesole G."/>
            <person name="Petrovsky N."/>
            <person name="Piazza S."/>
            <person name="Reed J."/>
            <person name="Reid J.F."/>
            <person name="Ring B.Z."/>
            <person name="Ringwald M."/>
            <person name="Rost B."/>
            <person name="Ruan Y."/>
            <person name="Salzberg S.L."/>
            <person name="Sandelin A."/>
            <person name="Schneider C."/>
            <person name="Schoenbach C."/>
            <person name="Sekiguchi K."/>
            <person name="Semple C.A."/>
            <person name="Seno S."/>
            <person name="Sessa L."/>
            <person name="Sheng Y."/>
            <person name="Shibata Y."/>
            <person name="Shimada H."/>
            <person name="Shimada K."/>
            <person name="Silva D."/>
            <person name="Sinclair B."/>
            <person name="Sperling S."/>
            <person name="Stupka E."/>
            <person name="Sugiura K."/>
            <person name="Sultana R."/>
            <person name="Takenaka Y."/>
            <person name="Taki K."/>
            <person name="Tammoja K."/>
            <person name="Tan S.L."/>
            <person name="Tang S."/>
            <person name="Taylor M.S."/>
            <person name="Tegner J."/>
            <person name="Teichmann S.A."/>
            <person name="Ueda H.R."/>
            <person name="van Nimwegen E."/>
            <person name="Verardo R."/>
            <person name="Wei C.L."/>
            <person name="Yagi K."/>
            <person name="Yamanishi H."/>
            <person name="Zabarovsky E."/>
            <person name="Zhu S."/>
            <person name="Zimmer A."/>
            <person name="Hide W."/>
            <person name="Bult C."/>
            <person name="Grimmond S.M."/>
            <person name="Teasdale R.D."/>
            <person name="Liu E.T."/>
            <person name="Brusic V."/>
            <person name="Quackenbush J."/>
            <person name="Wahlestedt C."/>
            <person name="Mattick J.S."/>
            <person name="Hume D.A."/>
            <person name="Kai C."/>
            <person name="Sasaki D."/>
            <person name="Tomaru Y."/>
            <person name="Fukuda S."/>
            <person name="Kanamori-Katayama M."/>
            <person name="Suzuki M."/>
            <person name="Aoki J."/>
            <person name="Arakawa T."/>
            <person name="Iida J."/>
            <person name="Imamura K."/>
            <person name="Itoh M."/>
            <person name="Kato T."/>
            <person name="Kawaji H."/>
            <person name="Kawagashira N."/>
            <person name="Kawashima T."/>
            <person name="Kojima M."/>
            <person name="Kondo S."/>
            <person name="Konno H."/>
            <person name="Nakano K."/>
            <person name="Ninomiya N."/>
            <person name="Nishio T."/>
            <person name="Okada M."/>
            <person name="Plessy C."/>
            <person name="Shibata K."/>
            <person name="Shiraki T."/>
            <person name="Suzuki S."/>
            <person name="Tagami M."/>
            <person name="Waki K."/>
            <person name="Watahiki A."/>
            <person name="Okamura-Oho Y."/>
            <person name="Suzuki H."/>
            <person name="Kawai J."/>
            <person name="Hayashizaki Y."/>
        </authorList>
    </citation>
    <scope>NUCLEOTIDE SEQUENCE [LARGE SCALE MRNA] OF 1-327</scope>
    <source>
        <strain>C57BL/6J</strain>
        <tissue>Eye</tissue>
    </source>
</reference>
<reference key="5">
    <citation type="journal article" date="2000" name="Mech. Dev.">
        <title>MAEG, an EGF-repeat containing gene, is a new marker associated with dermatome specification and morphogenesis of its derivatives.</title>
        <authorList>
            <person name="Buchner G."/>
            <person name="Broccoli V."/>
            <person name="Bulfone A."/>
            <person name="Orfanelli U."/>
            <person name="Gattuso C."/>
            <person name="Ballabio A."/>
            <person name="Franco B."/>
        </authorList>
    </citation>
    <scope>DEVELOPMENTAL STAGE</scope>
</reference>
<reference key="6">
    <citation type="journal article" date="2005" name="Exp. Cell Res.">
        <title>Expression of MAEG, a novel basement membrane protein, in mouse hair follicle morphogenesis.</title>
        <authorList>
            <person name="Osada A."/>
            <person name="Kiyozumi D."/>
            <person name="Tsutsui K."/>
            <person name="Ono Y."/>
            <person name="Weber C.N."/>
            <person name="Sugimoto N."/>
            <person name="Imai T."/>
            <person name="Okada A."/>
            <person name="Sekiguchi K."/>
        </authorList>
    </citation>
    <scope>FUNCTION</scope>
    <scope>MUTAGENESIS OF ASP-362</scope>
    <scope>TISSUE SPECIFICITY</scope>
    <scope>DEVELOPMENTAL STAGE</scope>
</reference>
<reference key="7">
    <citation type="journal article" date="2008" name="Proc. Natl. Acad. Sci. U.S.A.">
        <title>Transcriptome-based systematic identification of extracellular matrix proteins.</title>
        <authorList>
            <person name="Manabe R."/>
            <person name="Tsutsui K."/>
            <person name="Yamada T."/>
            <person name="Kimura M."/>
            <person name="Nakano I."/>
            <person name="Shimono C."/>
            <person name="Sanzen N."/>
            <person name="Furutani Y."/>
            <person name="Fukuda T."/>
            <person name="Oguri Y."/>
            <person name="Shimamoto K."/>
            <person name="Kiyozumi D."/>
            <person name="Sato Y."/>
            <person name="Sado Y."/>
            <person name="Senoo H."/>
            <person name="Yamashina S."/>
            <person name="Fukuda S."/>
            <person name="Kawai J."/>
            <person name="Sugiura N."/>
            <person name="Kimata K."/>
            <person name="Hayashizaki Y."/>
            <person name="Sekiguchi K."/>
        </authorList>
    </citation>
    <scope>FUNCTION</scope>
    <scope>SUBCELLULAR LOCATION</scope>
    <scope>DEVELOPMENTAL STAGE</scope>
</reference>
<reference key="8">
    <citation type="journal article" date="2010" name="Cell">
        <title>A tissue-specific atlas of mouse protein phosphorylation and expression.</title>
        <authorList>
            <person name="Huttlin E.L."/>
            <person name="Jedrychowski M.P."/>
            <person name="Elias J.E."/>
            <person name="Goswami T."/>
            <person name="Rad R."/>
            <person name="Beausoleil S.A."/>
            <person name="Villen J."/>
            <person name="Haas W."/>
            <person name="Sowa M.E."/>
            <person name="Gygi S.P."/>
        </authorList>
    </citation>
    <scope>IDENTIFICATION BY MASS SPECTROMETRY [LARGE SCALE ANALYSIS]</scope>
    <source>
        <tissue>Kidney</tissue>
    </source>
</reference>
<dbReference type="EMBL" id="AJ245672">
    <property type="protein sequence ID" value="CAB92138.1"/>
    <property type="molecule type" value="mRNA"/>
</dbReference>
<dbReference type="EMBL" id="AL672174">
    <property type="status" value="NOT_ANNOTATED_CDS"/>
    <property type="molecule type" value="Genomic_DNA"/>
</dbReference>
<dbReference type="EMBL" id="BC117702">
    <property type="protein sequence ID" value="AAI17703.1"/>
    <property type="molecule type" value="mRNA"/>
</dbReference>
<dbReference type="EMBL" id="AK053738">
    <property type="protein sequence ID" value="BAC35499.1"/>
    <property type="molecule type" value="mRNA"/>
</dbReference>
<dbReference type="CCDS" id="CCDS30528.1"/>
<dbReference type="RefSeq" id="NP_062270.1">
    <property type="nucleotide sequence ID" value="NM_019397.3"/>
</dbReference>
<dbReference type="SMR" id="Q9JJZ5"/>
<dbReference type="BioGRID" id="207583">
    <property type="interactions" value="1"/>
</dbReference>
<dbReference type="FunCoup" id="Q9JJZ5">
    <property type="interactions" value="71"/>
</dbReference>
<dbReference type="STRING" id="10090.ENSMUSP00000000412"/>
<dbReference type="GlyCosmos" id="Q9JJZ5">
    <property type="glycosylation" value="1 site, No reported glycans"/>
</dbReference>
<dbReference type="GlyGen" id="Q9JJZ5">
    <property type="glycosylation" value="1 site"/>
</dbReference>
<dbReference type="iPTMnet" id="Q9JJZ5"/>
<dbReference type="PhosphoSitePlus" id="Q9JJZ5"/>
<dbReference type="PaxDb" id="10090-ENSMUSP00000000412"/>
<dbReference type="ProteomicsDB" id="277558"/>
<dbReference type="Antibodypedia" id="641">
    <property type="antibodies" value="108 antibodies from 17 providers"/>
</dbReference>
<dbReference type="DNASU" id="54156"/>
<dbReference type="Ensembl" id="ENSMUST00000000412.3">
    <property type="protein sequence ID" value="ENSMUSP00000000412.3"/>
    <property type="gene ID" value="ENSMUSG00000000402.3"/>
</dbReference>
<dbReference type="GeneID" id="54156"/>
<dbReference type="KEGG" id="mmu:54156"/>
<dbReference type="UCSC" id="uc009uww.1">
    <property type="organism name" value="mouse"/>
</dbReference>
<dbReference type="AGR" id="MGI:1858599"/>
<dbReference type="CTD" id="25975"/>
<dbReference type="MGI" id="MGI:1858599">
    <property type="gene designation" value="Egfl6"/>
</dbReference>
<dbReference type="VEuPathDB" id="HostDB:ENSMUSG00000000402"/>
<dbReference type="eggNOG" id="KOG1217">
    <property type="taxonomic scope" value="Eukaryota"/>
</dbReference>
<dbReference type="GeneTree" id="ENSGT00930000150973"/>
<dbReference type="HOGENOM" id="CLU_036867_0_0_1"/>
<dbReference type="InParanoid" id="Q9JJZ5"/>
<dbReference type="OMA" id="NGRACID"/>
<dbReference type="OrthoDB" id="10045365at2759"/>
<dbReference type="PhylomeDB" id="Q9JJZ5"/>
<dbReference type="TreeFam" id="TF330819"/>
<dbReference type="BioGRID-ORCS" id="54156">
    <property type="hits" value="1 hit in 79 CRISPR screens"/>
</dbReference>
<dbReference type="ChiTaRS" id="Egfl6">
    <property type="organism name" value="mouse"/>
</dbReference>
<dbReference type="PRO" id="PR:Q9JJZ5"/>
<dbReference type="Proteomes" id="UP000000589">
    <property type="component" value="Chromosome X"/>
</dbReference>
<dbReference type="RNAct" id="Q9JJZ5">
    <property type="molecule type" value="protein"/>
</dbReference>
<dbReference type="Bgee" id="ENSMUSG00000000402">
    <property type="expression patterns" value="Expressed in humerus cartilage element and 162 other cell types or tissues"/>
</dbReference>
<dbReference type="GO" id="GO:0005604">
    <property type="term" value="C:basement membrane"/>
    <property type="evidence" value="ECO:0000314"/>
    <property type="project" value="MGI"/>
</dbReference>
<dbReference type="GO" id="GO:0031012">
    <property type="term" value="C:extracellular matrix"/>
    <property type="evidence" value="ECO:0000314"/>
    <property type="project" value="MGI"/>
</dbReference>
<dbReference type="GO" id="GO:0005576">
    <property type="term" value="C:extracellular region"/>
    <property type="evidence" value="ECO:0007669"/>
    <property type="project" value="UniProtKB-KW"/>
</dbReference>
<dbReference type="GO" id="GO:0016020">
    <property type="term" value="C:membrane"/>
    <property type="evidence" value="ECO:0007669"/>
    <property type="project" value="InterPro"/>
</dbReference>
<dbReference type="GO" id="GO:0005509">
    <property type="term" value="F:calcium ion binding"/>
    <property type="evidence" value="ECO:0007669"/>
    <property type="project" value="InterPro"/>
</dbReference>
<dbReference type="GO" id="GO:0007155">
    <property type="term" value="P:cell adhesion"/>
    <property type="evidence" value="ECO:0007669"/>
    <property type="project" value="UniProtKB-KW"/>
</dbReference>
<dbReference type="GO" id="GO:0030154">
    <property type="term" value="P:cell differentiation"/>
    <property type="evidence" value="ECO:0007669"/>
    <property type="project" value="UniProtKB-KW"/>
</dbReference>
<dbReference type="GO" id="GO:0030198">
    <property type="term" value="P:extracellular matrix organization"/>
    <property type="evidence" value="ECO:0000314"/>
    <property type="project" value="MGI"/>
</dbReference>
<dbReference type="GO" id="GO:0010811">
    <property type="term" value="P:positive regulation of cell-substrate adhesion"/>
    <property type="evidence" value="ECO:0000314"/>
    <property type="project" value="MGI"/>
</dbReference>
<dbReference type="CDD" id="cd00054">
    <property type="entry name" value="EGF_CA"/>
    <property type="match status" value="3"/>
</dbReference>
<dbReference type="CDD" id="cd06263">
    <property type="entry name" value="MAM"/>
    <property type="match status" value="1"/>
</dbReference>
<dbReference type="FunFam" id="2.10.25.10:FF:000038">
    <property type="entry name" value="Fibrillin 2"/>
    <property type="match status" value="1"/>
</dbReference>
<dbReference type="FunFam" id="2.10.25.10:FF:000476">
    <property type="entry name" value="nephronectin isoform X1"/>
    <property type="match status" value="1"/>
</dbReference>
<dbReference type="FunFam" id="2.10.25.10:FF:000184">
    <property type="entry name" value="nephronectin isoform X2"/>
    <property type="match status" value="1"/>
</dbReference>
<dbReference type="FunFam" id="2.10.25.10:FF:000268">
    <property type="entry name" value="nephronectin isoform X2"/>
    <property type="match status" value="1"/>
</dbReference>
<dbReference type="Gene3D" id="2.60.120.200">
    <property type="match status" value="1"/>
</dbReference>
<dbReference type="Gene3D" id="2.10.25.10">
    <property type="entry name" value="Laminin"/>
    <property type="match status" value="5"/>
</dbReference>
<dbReference type="InterPro" id="IPR013320">
    <property type="entry name" value="ConA-like_dom_sf"/>
</dbReference>
<dbReference type="InterPro" id="IPR001881">
    <property type="entry name" value="EGF-like_Ca-bd_dom"/>
</dbReference>
<dbReference type="InterPro" id="IPR000742">
    <property type="entry name" value="EGF-like_dom"/>
</dbReference>
<dbReference type="InterPro" id="IPR000152">
    <property type="entry name" value="EGF-type_Asp/Asn_hydroxyl_site"/>
</dbReference>
<dbReference type="InterPro" id="IPR018097">
    <property type="entry name" value="EGF_Ca-bd_CS"/>
</dbReference>
<dbReference type="InterPro" id="IPR024731">
    <property type="entry name" value="EGF_dom"/>
</dbReference>
<dbReference type="InterPro" id="IPR009030">
    <property type="entry name" value="Growth_fac_rcpt_cys_sf"/>
</dbReference>
<dbReference type="InterPro" id="IPR000998">
    <property type="entry name" value="MAM_dom"/>
</dbReference>
<dbReference type="InterPro" id="IPR052235">
    <property type="entry name" value="Nephronectin_domain"/>
</dbReference>
<dbReference type="InterPro" id="IPR049883">
    <property type="entry name" value="NOTCH1_EGF-like"/>
</dbReference>
<dbReference type="PANTHER" id="PTHR24050:SF24">
    <property type="entry name" value="EPIDERMAL GROWTH FACTOR-LIKE PROTEIN 6"/>
    <property type="match status" value="1"/>
</dbReference>
<dbReference type="PANTHER" id="PTHR24050">
    <property type="entry name" value="PA14 DOMAIN-CONTAINING PROTEIN"/>
    <property type="match status" value="1"/>
</dbReference>
<dbReference type="Pfam" id="PF12947">
    <property type="entry name" value="EGF_3"/>
    <property type="match status" value="1"/>
</dbReference>
<dbReference type="Pfam" id="PF07645">
    <property type="entry name" value="EGF_CA"/>
    <property type="match status" value="2"/>
</dbReference>
<dbReference type="Pfam" id="PF00629">
    <property type="entry name" value="MAM"/>
    <property type="match status" value="1"/>
</dbReference>
<dbReference type="SMART" id="SM00181">
    <property type="entry name" value="EGF"/>
    <property type="match status" value="5"/>
</dbReference>
<dbReference type="SMART" id="SM00179">
    <property type="entry name" value="EGF_CA"/>
    <property type="match status" value="3"/>
</dbReference>
<dbReference type="SMART" id="SM00137">
    <property type="entry name" value="MAM"/>
    <property type="match status" value="1"/>
</dbReference>
<dbReference type="SUPFAM" id="SSF49899">
    <property type="entry name" value="Concanavalin A-like lectins/glucanases"/>
    <property type="match status" value="1"/>
</dbReference>
<dbReference type="SUPFAM" id="SSF57184">
    <property type="entry name" value="Growth factor receptor domain"/>
    <property type="match status" value="2"/>
</dbReference>
<dbReference type="PROSITE" id="PS00010">
    <property type="entry name" value="ASX_HYDROXYL"/>
    <property type="match status" value="3"/>
</dbReference>
<dbReference type="PROSITE" id="PS00022">
    <property type="entry name" value="EGF_1"/>
    <property type="match status" value="1"/>
</dbReference>
<dbReference type="PROSITE" id="PS01186">
    <property type="entry name" value="EGF_2"/>
    <property type="match status" value="2"/>
</dbReference>
<dbReference type="PROSITE" id="PS50026">
    <property type="entry name" value="EGF_3"/>
    <property type="match status" value="4"/>
</dbReference>
<dbReference type="PROSITE" id="PS01187">
    <property type="entry name" value="EGF_CA"/>
    <property type="match status" value="3"/>
</dbReference>
<dbReference type="PROSITE" id="PS50060">
    <property type="entry name" value="MAM_2"/>
    <property type="match status" value="1"/>
</dbReference>
<organism>
    <name type="scientific">Mus musculus</name>
    <name type="common">Mouse</name>
    <dbReference type="NCBI Taxonomy" id="10090"/>
    <lineage>
        <taxon>Eukaryota</taxon>
        <taxon>Metazoa</taxon>
        <taxon>Chordata</taxon>
        <taxon>Craniata</taxon>
        <taxon>Vertebrata</taxon>
        <taxon>Euteleostomi</taxon>
        <taxon>Mammalia</taxon>
        <taxon>Eutheria</taxon>
        <taxon>Euarchontoglires</taxon>
        <taxon>Glires</taxon>
        <taxon>Rodentia</taxon>
        <taxon>Myomorpha</taxon>
        <taxon>Muroidea</taxon>
        <taxon>Muridae</taxon>
        <taxon>Murinae</taxon>
        <taxon>Mus</taxon>
        <taxon>Mus</taxon>
    </lineage>
</organism>
<name>EGFL6_MOUSE</name>
<proteinExistence type="evidence at protein level"/>
<accession>Q9JJZ5</accession>
<accession>Q8BPM8</accession>
<evidence type="ECO:0000255" key="1"/>
<evidence type="ECO:0000255" key="2">
    <source>
        <dbReference type="PROSITE-ProRule" id="PRU00076"/>
    </source>
</evidence>
<evidence type="ECO:0000255" key="3">
    <source>
        <dbReference type="PROSITE-ProRule" id="PRU00128"/>
    </source>
</evidence>
<evidence type="ECO:0000256" key="4">
    <source>
        <dbReference type="SAM" id="MobiDB-lite"/>
    </source>
</evidence>
<evidence type="ECO:0000269" key="5">
    <source>
    </source>
</evidence>
<evidence type="ECO:0000269" key="6">
    <source>
    </source>
</evidence>
<evidence type="ECO:0000269" key="7">
    <source>
    </source>
</evidence>
<evidence type="ECO:0000305" key="8"/>
<feature type="signal peptide" evidence="1">
    <location>
        <begin position="1"/>
        <end position="18"/>
    </location>
</feature>
<feature type="chain" id="PRO_0000295812" description="Epidermal growth factor-like protein 6">
    <location>
        <begin position="19"/>
        <end position="550"/>
    </location>
</feature>
<feature type="domain" description="EGF-like 1" evidence="2">
    <location>
        <begin position="55"/>
        <end position="90"/>
    </location>
</feature>
<feature type="domain" description="EGF-like 2; calcium-binding" evidence="2">
    <location>
        <begin position="92"/>
        <end position="131"/>
    </location>
</feature>
<feature type="domain" description="EGF-like 3" evidence="2">
    <location>
        <begin position="135"/>
        <end position="171"/>
    </location>
</feature>
<feature type="domain" description="EGF-like 4; calcium-binding" evidence="2">
    <location>
        <begin position="172"/>
        <end position="210"/>
    </location>
</feature>
<feature type="domain" description="EGF-like 5; calcium-binding" evidence="2">
    <location>
        <begin position="217"/>
        <end position="257"/>
    </location>
</feature>
<feature type="domain" description="MAM" evidence="3">
    <location>
        <begin position="397"/>
        <end position="543"/>
    </location>
</feature>
<feature type="region of interest" description="Disordered" evidence="4">
    <location>
        <begin position="295"/>
        <end position="354"/>
    </location>
</feature>
<feature type="coiled-coil region" evidence="1">
    <location>
        <begin position="327"/>
        <end position="357"/>
    </location>
</feature>
<feature type="compositionally biased region" description="Basic and acidic residues" evidence="4">
    <location>
        <begin position="318"/>
        <end position="354"/>
    </location>
</feature>
<feature type="glycosylation site" description="N-linked (GlcNAc...) asparagine" evidence="1">
    <location>
        <position position="394"/>
    </location>
</feature>
<feature type="disulfide bond" evidence="2">
    <location>
        <begin position="59"/>
        <end position="72"/>
    </location>
</feature>
<feature type="disulfide bond" evidence="2">
    <location>
        <begin position="63"/>
        <end position="78"/>
    </location>
</feature>
<feature type="disulfide bond" evidence="2">
    <location>
        <begin position="80"/>
        <end position="89"/>
    </location>
</feature>
<feature type="disulfide bond" evidence="2">
    <location>
        <begin position="96"/>
        <end position="107"/>
    </location>
</feature>
<feature type="disulfide bond" evidence="2">
    <location>
        <begin position="103"/>
        <end position="116"/>
    </location>
</feature>
<feature type="disulfide bond" evidence="2">
    <location>
        <begin position="118"/>
        <end position="130"/>
    </location>
</feature>
<feature type="disulfide bond" evidence="2">
    <location>
        <begin position="176"/>
        <end position="189"/>
    </location>
</feature>
<feature type="disulfide bond" evidence="2">
    <location>
        <begin position="183"/>
        <end position="198"/>
    </location>
</feature>
<feature type="disulfide bond" evidence="2">
    <location>
        <begin position="221"/>
        <end position="234"/>
    </location>
</feature>
<feature type="disulfide bond" evidence="2">
    <location>
        <begin position="228"/>
        <end position="243"/>
    </location>
</feature>
<feature type="disulfide bond" evidence="2">
    <location>
        <begin position="245"/>
        <end position="256"/>
    </location>
</feature>
<feature type="mutagenesis site" description="Loss of adhesive activity." evidence="6">
    <original>D</original>
    <variation>E</variation>
    <location>
        <position position="362"/>
    </location>
</feature>
<protein>
    <recommendedName>
        <fullName>Epidermal growth factor-like protein 6</fullName>
        <shortName>EGF-like protein 6</shortName>
    </recommendedName>
    <alternativeName>
        <fullName>MAM and EGF domains-containing gene protein</fullName>
    </alternativeName>
    <alternativeName>
        <fullName>Protein W80</fullName>
    </alternativeName>
</protein>